<feature type="chain" id="PRO_0000069945" description="RYamide receptor">
    <location>
        <begin position="1"/>
        <end position="464"/>
    </location>
</feature>
<feature type="topological domain" description="Extracellular" evidence="1">
    <location>
        <begin position="1"/>
        <end position="105"/>
    </location>
</feature>
<feature type="transmembrane region" description="Helical; Name=1" evidence="1">
    <location>
        <begin position="106"/>
        <end position="126"/>
    </location>
</feature>
<feature type="topological domain" description="Cytoplasmic" evidence="1">
    <location>
        <begin position="127"/>
        <end position="148"/>
    </location>
</feature>
<feature type="transmembrane region" description="Helical; Name=2" evidence="1">
    <location>
        <begin position="149"/>
        <end position="169"/>
    </location>
</feature>
<feature type="topological domain" description="Extracellular" evidence="1">
    <location>
        <begin position="170"/>
        <end position="189"/>
    </location>
</feature>
<feature type="transmembrane region" description="Helical; Name=3" evidence="1">
    <location>
        <begin position="190"/>
        <end position="210"/>
    </location>
</feature>
<feature type="topological domain" description="Cytoplasmic" evidence="1">
    <location>
        <begin position="211"/>
        <end position="221"/>
    </location>
</feature>
<feature type="transmembrane region" description="Helical; Name=4" evidence="1">
    <location>
        <begin position="222"/>
        <end position="242"/>
    </location>
</feature>
<feature type="topological domain" description="Extracellular" evidence="1">
    <location>
        <begin position="243"/>
        <end position="274"/>
    </location>
</feature>
<feature type="transmembrane region" description="Helical; Name=5" evidence="1">
    <location>
        <begin position="275"/>
        <end position="295"/>
    </location>
</feature>
<feature type="topological domain" description="Cytoplasmic" evidence="1">
    <location>
        <begin position="296"/>
        <end position="329"/>
    </location>
</feature>
<feature type="transmembrane region" description="Helical; Name=6" evidence="1">
    <location>
        <begin position="330"/>
        <end position="350"/>
    </location>
</feature>
<feature type="topological domain" description="Extracellular" evidence="1">
    <location>
        <begin position="351"/>
        <end position="363"/>
    </location>
</feature>
<feature type="transmembrane region" description="Helical; Name=7" evidence="1">
    <location>
        <begin position="364"/>
        <end position="384"/>
    </location>
</feature>
<feature type="topological domain" description="Cytoplasmic" evidence="1">
    <location>
        <begin position="385"/>
        <end position="464"/>
    </location>
</feature>
<feature type="glycosylation site" description="N-linked (GlcNAc...) asparagine" evidence="1">
    <location>
        <position position="49"/>
    </location>
</feature>
<feature type="glycosylation site" description="N-linked (GlcNAc...) asparagine" evidence="1">
    <location>
        <position position="79"/>
    </location>
</feature>
<feature type="glycosylation site" description="N-linked (GlcNAc...) asparagine" evidence="1">
    <location>
        <position position="85"/>
    </location>
</feature>
<feature type="glycosylation site" description="N-linked (GlcNAc...) asparagine" evidence="1">
    <location>
        <position position="183"/>
    </location>
</feature>
<feature type="sequence conflict" description="In Ref. 1; AEP22450 and 4; AAT94531." evidence="8" ref="1 4">
    <original>L</original>
    <variation>R</variation>
    <location>
        <position position="8"/>
    </location>
</feature>
<feature type="sequence conflict" description="In Ref. 1; AEP22450 and 4; AAT94531." evidence="8" ref="1 4">
    <original>I</original>
    <variation>L</variation>
    <location>
        <position position="47"/>
    </location>
</feature>
<name>RYAR_DROME</name>
<comment type="function">
    <text evidence="4 5">Receptor for the neuropeptides RYamide-1 and RYamide-2 (PubMed:21704020, PubMed:21843505). The activity of this receptor is mediated by G proteins which activate a phosphatidyl-inositol-calcium second messenger system (PubMed:21704020, PubMed:21843505). RYamide signaling may suppress feeding behavior (PubMed:21704020).</text>
</comment>
<comment type="subcellular location">
    <subcellularLocation>
        <location evidence="3 4 5">Cell membrane</location>
        <topology evidence="1">Multi-pass membrane protein</topology>
    </subcellularLocation>
</comment>
<comment type="developmental stage">
    <text evidence="3">Expressed at low levels during early embryonic stages, its expression increases later and reaches the highest level during late stages of embryogenesis. Subsequently, its levels are reduced during larval stages and increase during pupal stages.</text>
</comment>
<comment type="similarity">
    <text evidence="2">Belongs to the G-protein coupled receptor 1 family.</text>
</comment>
<comment type="sequence caution" evidence="8">
    <conflict type="erroneous initiation">
        <sequence resource="EMBL-CDS" id="AAA28727"/>
    </conflict>
    <text>Truncated N-terminus.</text>
</comment>
<sequence>MEHHNSHLLPGGSEKMYYIAHQQPMLRNEDDNYQEGYFIRPDPASLIYNTTALPADDEGSNYGYGSTTTLSGLQFETYNITVMMNFSCDDYDLLSEDMWSSAYFKIIVYMLYIPIFIFALIGNGTVCYIVYSTPRMRTVTNYFIASLAIGDILMSFFCVPSSFISLFILNYWPFGLALCHFVNYSQAVSVLVSAYTLVAISIDRYIAIMWPLKPRITKRYATFIIAGVWFIALATALPIPIVSGLDIPMSPWHTKCEKYICREMWPSRTQEYYYTLSLFALQFVVPLGVLIFTYARITIRVWAKRPPGEAETNRDQRMARSKRKMVKMMLTVVIVFTCCWLPFNILQLLLNDEEFAHWDPLPYVWFAFHWLAMSHCCYNPIIYCYMNARFRSGFVQLMHRMPGLRRWCCLRSVGDRMNATSGTGPALPLNRMNTSTTYISARRKPRATSLRANPLSCGETSPLR</sequence>
<keyword id="KW-1003">Cell membrane</keyword>
<keyword id="KW-0297">G-protein coupled receptor</keyword>
<keyword id="KW-0325">Glycoprotein</keyword>
<keyword id="KW-0472">Membrane</keyword>
<keyword id="KW-0675">Receptor</keyword>
<keyword id="KW-1185">Reference proteome</keyword>
<keyword id="KW-0807">Transducer</keyword>
<keyword id="KW-0812">Transmembrane</keyword>
<keyword id="KW-1133">Transmembrane helix</keyword>
<dbReference type="EMBL" id="JN234381">
    <property type="protein sequence ID" value="AEP22450.1"/>
    <property type="molecule type" value="mRNA"/>
</dbReference>
<dbReference type="EMBL" id="AE014297">
    <property type="protein sequence ID" value="AAF56655.3"/>
    <property type="molecule type" value="Genomic_DNA"/>
</dbReference>
<dbReference type="EMBL" id="BT015303">
    <property type="protein sequence ID" value="AAT94531.1"/>
    <property type="molecule type" value="mRNA"/>
</dbReference>
<dbReference type="EMBL" id="M81490">
    <property type="protein sequence ID" value="AAA28727.1"/>
    <property type="status" value="ALT_INIT"/>
    <property type="molecule type" value="mRNA"/>
</dbReference>
<dbReference type="PIR" id="A41738">
    <property type="entry name" value="A41738"/>
</dbReference>
<dbReference type="RefSeq" id="NP_524525.3">
    <property type="nucleotide sequence ID" value="NM_079801.4"/>
</dbReference>
<dbReference type="SMR" id="P25931"/>
<dbReference type="BioGRID" id="68143">
    <property type="interactions" value="1"/>
</dbReference>
<dbReference type="FunCoup" id="P25931">
    <property type="interactions" value="29"/>
</dbReference>
<dbReference type="STRING" id="7227.FBpp0311444"/>
<dbReference type="BindingDB" id="P25931"/>
<dbReference type="ChEMBL" id="CHEMBL3879848"/>
<dbReference type="GlyCosmos" id="P25931">
    <property type="glycosylation" value="4 sites, No reported glycans"/>
</dbReference>
<dbReference type="GlyGen" id="P25931">
    <property type="glycosylation" value="4 sites"/>
</dbReference>
<dbReference type="PaxDb" id="7227-FBpp0084470"/>
<dbReference type="EnsemblMetazoa" id="FBtr0085100">
    <property type="protein sequence ID" value="FBpp0084470"/>
    <property type="gene ID" value="FBgn0004842"/>
</dbReference>
<dbReference type="GeneID" id="43253"/>
<dbReference type="KEGG" id="dme:Dmel_CG5811"/>
<dbReference type="AGR" id="FB:FBgn0004842"/>
<dbReference type="CTD" id="43253"/>
<dbReference type="FlyBase" id="FBgn0004842">
    <property type="gene designation" value="RYa-R"/>
</dbReference>
<dbReference type="VEuPathDB" id="VectorBase:FBgn0004842"/>
<dbReference type="eggNOG" id="KOG3656">
    <property type="taxonomic scope" value="Eukaryota"/>
</dbReference>
<dbReference type="GeneTree" id="ENSGT01130000278294"/>
<dbReference type="InParanoid" id="P25931"/>
<dbReference type="OrthoDB" id="10053194at2759"/>
<dbReference type="PhylomeDB" id="P25931"/>
<dbReference type="BioGRID-ORCS" id="43253">
    <property type="hits" value="0 hits in 1 CRISPR screen"/>
</dbReference>
<dbReference type="ChiTaRS" id="RYa-R">
    <property type="organism name" value="fly"/>
</dbReference>
<dbReference type="GenomeRNAi" id="43253"/>
<dbReference type="PRO" id="PR:P25931"/>
<dbReference type="Proteomes" id="UP000000803">
    <property type="component" value="Chromosome 3R"/>
</dbReference>
<dbReference type="Bgee" id="FBgn0004842">
    <property type="expression patterns" value="Expressed in adult hindgut (Drosophila) and 3 other cell types or tissues"/>
</dbReference>
<dbReference type="ExpressionAtlas" id="P25931">
    <property type="expression patterns" value="baseline and differential"/>
</dbReference>
<dbReference type="GO" id="GO:0016020">
    <property type="term" value="C:membrane"/>
    <property type="evidence" value="ECO:0000250"/>
    <property type="project" value="FlyBase"/>
</dbReference>
<dbReference type="GO" id="GO:0005886">
    <property type="term" value="C:plasma membrane"/>
    <property type="evidence" value="ECO:0000318"/>
    <property type="project" value="GO_Central"/>
</dbReference>
<dbReference type="GO" id="GO:0008188">
    <property type="term" value="F:neuropeptide receptor activity"/>
    <property type="evidence" value="ECO:0000255"/>
    <property type="project" value="FlyBase"/>
</dbReference>
<dbReference type="GO" id="GO:0004983">
    <property type="term" value="F:neuropeptide Y receptor activity"/>
    <property type="evidence" value="ECO:0007669"/>
    <property type="project" value="InterPro"/>
</dbReference>
<dbReference type="GO" id="GO:0001653">
    <property type="term" value="F:peptide receptor activity"/>
    <property type="evidence" value="ECO:0000353"/>
    <property type="project" value="FlyBase"/>
</dbReference>
<dbReference type="GO" id="GO:0007186">
    <property type="term" value="P:G protein-coupled receptor signaling pathway"/>
    <property type="evidence" value="ECO:0000314"/>
    <property type="project" value="FlyBase"/>
</dbReference>
<dbReference type="GO" id="GO:0007218">
    <property type="term" value="P:neuropeptide signaling pathway"/>
    <property type="evidence" value="ECO:0000318"/>
    <property type="project" value="GO_Central"/>
</dbReference>
<dbReference type="CDD" id="cd15392">
    <property type="entry name" value="7tmA_PR4-like"/>
    <property type="match status" value="1"/>
</dbReference>
<dbReference type="FunFam" id="1.20.1070.10:FF:000833">
    <property type="entry name" value="RYamide receptor, isoform C"/>
    <property type="match status" value="1"/>
</dbReference>
<dbReference type="Gene3D" id="1.20.1070.10">
    <property type="entry name" value="Rhodopsin 7-helix transmembrane proteins"/>
    <property type="match status" value="1"/>
</dbReference>
<dbReference type="InterPro" id="IPR000276">
    <property type="entry name" value="GPCR_Rhodpsn"/>
</dbReference>
<dbReference type="InterPro" id="IPR017452">
    <property type="entry name" value="GPCR_Rhodpsn_7TM"/>
</dbReference>
<dbReference type="InterPro" id="IPR000611">
    <property type="entry name" value="NPY_rcpt"/>
</dbReference>
<dbReference type="PANTHER" id="PTHR24238">
    <property type="entry name" value="G-PROTEIN COUPLED RECEPTOR"/>
    <property type="match status" value="1"/>
</dbReference>
<dbReference type="PANTHER" id="PTHR24238:SF73">
    <property type="entry name" value="RYAMIDE RECEPTOR"/>
    <property type="match status" value="1"/>
</dbReference>
<dbReference type="Pfam" id="PF00001">
    <property type="entry name" value="7tm_1"/>
    <property type="match status" value="1"/>
</dbReference>
<dbReference type="PRINTS" id="PR00237">
    <property type="entry name" value="GPCRRHODOPSN"/>
</dbReference>
<dbReference type="PRINTS" id="PR01012">
    <property type="entry name" value="NRPEPTIDEYR"/>
</dbReference>
<dbReference type="SMART" id="SM01381">
    <property type="entry name" value="7TM_GPCR_Srsx"/>
    <property type="match status" value="1"/>
</dbReference>
<dbReference type="SUPFAM" id="SSF81321">
    <property type="entry name" value="Family A G protein-coupled receptor-like"/>
    <property type="match status" value="1"/>
</dbReference>
<dbReference type="PROSITE" id="PS00237">
    <property type="entry name" value="G_PROTEIN_RECEP_F1_1"/>
    <property type="match status" value="1"/>
</dbReference>
<dbReference type="PROSITE" id="PS50262">
    <property type="entry name" value="G_PROTEIN_RECEP_F1_2"/>
    <property type="match status" value="1"/>
</dbReference>
<organism>
    <name type="scientific">Drosophila melanogaster</name>
    <name type="common">Fruit fly</name>
    <dbReference type="NCBI Taxonomy" id="7227"/>
    <lineage>
        <taxon>Eukaryota</taxon>
        <taxon>Metazoa</taxon>
        <taxon>Ecdysozoa</taxon>
        <taxon>Arthropoda</taxon>
        <taxon>Hexapoda</taxon>
        <taxon>Insecta</taxon>
        <taxon>Pterygota</taxon>
        <taxon>Neoptera</taxon>
        <taxon>Endopterygota</taxon>
        <taxon>Diptera</taxon>
        <taxon>Brachycera</taxon>
        <taxon>Muscomorpha</taxon>
        <taxon>Ephydroidea</taxon>
        <taxon>Drosophilidae</taxon>
        <taxon>Drosophila</taxon>
        <taxon>Sophophora</taxon>
    </lineage>
</organism>
<accession>P25931</accession>
<accession>Q6AWE5</accession>
<accession>Q9VB87</accession>
<gene>
    <name evidence="7" type="primary">RYa-R</name>
    <name evidence="6" type="synonym">NepYr</name>
    <name evidence="10" type="ORF">CG5811</name>
</gene>
<proteinExistence type="evidence at transcript level"/>
<evidence type="ECO:0000255" key="1"/>
<evidence type="ECO:0000255" key="2">
    <source>
        <dbReference type="PROSITE-ProRule" id="PRU00521"/>
    </source>
</evidence>
<evidence type="ECO:0000269" key="3">
    <source>
    </source>
</evidence>
<evidence type="ECO:0000269" key="4">
    <source>
    </source>
</evidence>
<evidence type="ECO:0000269" key="5">
    <source>
    </source>
</evidence>
<evidence type="ECO:0000303" key="6">
    <source>
    </source>
</evidence>
<evidence type="ECO:0000303" key="7">
    <source>
    </source>
</evidence>
<evidence type="ECO:0000305" key="8"/>
<evidence type="ECO:0000312" key="9">
    <source>
        <dbReference type="EMBL" id="AAT94531.1"/>
    </source>
</evidence>
<evidence type="ECO:0000312" key="10">
    <source>
        <dbReference type="FlyBase" id="FBgn0004842"/>
    </source>
</evidence>
<protein>
    <recommendedName>
        <fullName evidence="7">RYamide receptor</fullName>
    </recommendedName>
    <alternativeName>
        <fullName evidence="6">Neuropeptide Y-like receptor</fullName>
        <shortName evidence="6">NPY-R</shortName>
    </alternativeName>
</protein>
<reference key="1">
    <citation type="journal article" date="2011" name="Biochem. Biophys. Res. Commun.">
        <title>Identification of the Drosophila and Tribolium receptors for the recently discovered insect RYamide neuropeptides.</title>
        <authorList>
            <person name="Collin C."/>
            <person name="Hauser F."/>
            <person name="Krogh-Meyer P."/>
            <person name="Hansen K.K."/>
            <person name="Gonzalez de Valdivia E."/>
            <person name="Williamson M."/>
            <person name="Grimmelikhuijzen C.J."/>
        </authorList>
    </citation>
    <scope>NUCLEOTIDE SEQUENCE [MRNA]</scope>
    <scope>FUNCTION</scope>
    <scope>SUBCELLULAR LOCATION</scope>
</reference>
<reference key="2">
    <citation type="journal article" date="2000" name="Science">
        <title>The genome sequence of Drosophila melanogaster.</title>
        <authorList>
            <person name="Adams M.D."/>
            <person name="Celniker S.E."/>
            <person name="Holt R.A."/>
            <person name="Evans C.A."/>
            <person name="Gocayne J.D."/>
            <person name="Amanatides P.G."/>
            <person name="Scherer S.E."/>
            <person name="Li P.W."/>
            <person name="Hoskins R.A."/>
            <person name="Galle R.F."/>
            <person name="George R.A."/>
            <person name="Lewis S.E."/>
            <person name="Richards S."/>
            <person name="Ashburner M."/>
            <person name="Henderson S.N."/>
            <person name="Sutton G.G."/>
            <person name="Wortman J.R."/>
            <person name="Yandell M.D."/>
            <person name="Zhang Q."/>
            <person name="Chen L.X."/>
            <person name="Brandon R.C."/>
            <person name="Rogers Y.-H.C."/>
            <person name="Blazej R.G."/>
            <person name="Champe M."/>
            <person name="Pfeiffer B.D."/>
            <person name="Wan K.H."/>
            <person name="Doyle C."/>
            <person name="Baxter E.G."/>
            <person name="Helt G."/>
            <person name="Nelson C.R."/>
            <person name="Miklos G.L.G."/>
            <person name="Abril J.F."/>
            <person name="Agbayani A."/>
            <person name="An H.-J."/>
            <person name="Andrews-Pfannkoch C."/>
            <person name="Baldwin D."/>
            <person name="Ballew R.M."/>
            <person name="Basu A."/>
            <person name="Baxendale J."/>
            <person name="Bayraktaroglu L."/>
            <person name="Beasley E.M."/>
            <person name="Beeson K.Y."/>
            <person name="Benos P.V."/>
            <person name="Berman B.P."/>
            <person name="Bhandari D."/>
            <person name="Bolshakov S."/>
            <person name="Borkova D."/>
            <person name="Botchan M.R."/>
            <person name="Bouck J."/>
            <person name="Brokstein P."/>
            <person name="Brottier P."/>
            <person name="Burtis K.C."/>
            <person name="Busam D.A."/>
            <person name="Butler H."/>
            <person name="Cadieu E."/>
            <person name="Center A."/>
            <person name="Chandra I."/>
            <person name="Cherry J.M."/>
            <person name="Cawley S."/>
            <person name="Dahlke C."/>
            <person name="Davenport L.B."/>
            <person name="Davies P."/>
            <person name="de Pablos B."/>
            <person name="Delcher A."/>
            <person name="Deng Z."/>
            <person name="Mays A.D."/>
            <person name="Dew I."/>
            <person name="Dietz S.M."/>
            <person name="Dodson K."/>
            <person name="Doup L.E."/>
            <person name="Downes M."/>
            <person name="Dugan-Rocha S."/>
            <person name="Dunkov B.C."/>
            <person name="Dunn P."/>
            <person name="Durbin K.J."/>
            <person name="Evangelista C.C."/>
            <person name="Ferraz C."/>
            <person name="Ferriera S."/>
            <person name="Fleischmann W."/>
            <person name="Fosler C."/>
            <person name="Gabrielian A.E."/>
            <person name="Garg N.S."/>
            <person name="Gelbart W.M."/>
            <person name="Glasser K."/>
            <person name="Glodek A."/>
            <person name="Gong F."/>
            <person name="Gorrell J.H."/>
            <person name="Gu Z."/>
            <person name="Guan P."/>
            <person name="Harris M."/>
            <person name="Harris N.L."/>
            <person name="Harvey D.A."/>
            <person name="Heiman T.J."/>
            <person name="Hernandez J.R."/>
            <person name="Houck J."/>
            <person name="Hostin D."/>
            <person name="Houston K.A."/>
            <person name="Howland T.J."/>
            <person name="Wei M.-H."/>
            <person name="Ibegwam C."/>
            <person name="Jalali M."/>
            <person name="Kalush F."/>
            <person name="Karpen G.H."/>
            <person name="Ke Z."/>
            <person name="Kennison J.A."/>
            <person name="Ketchum K.A."/>
            <person name="Kimmel B.E."/>
            <person name="Kodira C.D."/>
            <person name="Kraft C.L."/>
            <person name="Kravitz S."/>
            <person name="Kulp D."/>
            <person name="Lai Z."/>
            <person name="Lasko P."/>
            <person name="Lei Y."/>
            <person name="Levitsky A.A."/>
            <person name="Li J.H."/>
            <person name="Li Z."/>
            <person name="Liang Y."/>
            <person name="Lin X."/>
            <person name="Liu X."/>
            <person name="Mattei B."/>
            <person name="McIntosh T.C."/>
            <person name="McLeod M.P."/>
            <person name="McPherson D."/>
            <person name="Merkulov G."/>
            <person name="Milshina N.V."/>
            <person name="Mobarry C."/>
            <person name="Morris J."/>
            <person name="Moshrefi A."/>
            <person name="Mount S.M."/>
            <person name="Moy M."/>
            <person name="Murphy B."/>
            <person name="Murphy L."/>
            <person name="Muzny D.M."/>
            <person name="Nelson D.L."/>
            <person name="Nelson D.R."/>
            <person name="Nelson K.A."/>
            <person name="Nixon K."/>
            <person name="Nusskern D.R."/>
            <person name="Pacleb J.M."/>
            <person name="Palazzolo M."/>
            <person name="Pittman G.S."/>
            <person name="Pan S."/>
            <person name="Pollard J."/>
            <person name="Puri V."/>
            <person name="Reese M.G."/>
            <person name="Reinert K."/>
            <person name="Remington K."/>
            <person name="Saunders R.D.C."/>
            <person name="Scheeler F."/>
            <person name="Shen H."/>
            <person name="Shue B.C."/>
            <person name="Siden-Kiamos I."/>
            <person name="Simpson M."/>
            <person name="Skupski M.P."/>
            <person name="Smith T.J."/>
            <person name="Spier E."/>
            <person name="Spradling A.C."/>
            <person name="Stapleton M."/>
            <person name="Strong R."/>
            <person name="Sun E."/>
            <person name="Svirskas R."/>
            <person name="Tector C."/>
            <person name="Turner R."/>
            <person name="Venter E."/>
            <person name="Wang A.H."/>
            <person name="Wang X."/>
            <person name="Wang Z.-Y."/>
            <person name="Wassarman D.A."/>
            <person name="Weinstock G.M."/>
            <person name="Weissenbach J."/>
            <person name="Williams S.M."/>
            <person name="Woodage T."/>
            <person name="Worley K.C."/>
            <person name="Wu D."/>
            <person name="Yang S."/>
            <person name="Yao Q.A."/>
            <person name="Ye J."/>
            <person name="Yeh R.-F."/>
            <person name="Zaveri J.S."/>
            <person name="Zhan M."/>
            <person name="Zhang G."/>
            <person name="Zhao Q."/>
            <person name="Zheng L."/>
            <person name="Zheng X.H."/>
            <person name="Zhong F.N."/>
            <person name="Zhong W."/>
            <person name="Zhou X."/>
            <person name="Zhu S.C."/>
            <person name="Zhu X."/>
            <person name="Smith H.O."/>
            <person name="Gibbs R.A."/>
            <person name="Myers E.W."/>
            <person name="Rubin G.M."/>
            <person name="Venter J.C."/>
        </authorList>
    </citation>
    <scope>NUCLEOTIDE SEQUENCE [LARGE SCALE GENOMIC DNA]</scope>
    <source>
        <strain>Berkeley</strain>
    </source>
</reference>
<reference key="3">
    <citation type="journal article" date="2002" name="Genome Biol.">
        <title>Annotation of the Drosophila melanogaster euchromatic genome: a systematic review.</title>
        <authorList>
            <person name="Misra S."/>
            <person name="Crosby M.A."/>
            <person name="Mungall C.J."/>
            <person name="Matthews B.B."/>
            <person name="Campbell K.S."/>
            <person name="Hradecky P."/>
            <person name="Huang Y."/>
            <person name="Kaminker J.S."/>
            <person name="Millburn G.H."/>
            <person name="Prochnik S.E."/>
            <person name="Smith C.D."/>
            <person name="Tupy J.L."/>
            <person name="Whitfield E.J."/>
            <person name="Bayraktaroglu L."/>
            <person name="Berman B.P."/>
            <person name="Bettencourt B.R."/>
            <person name="Celniker S.E."/>
            <person name="de Grey A.D.N.J."/>
            <person name="Drysdale R.A."/>
            <person name="Harris N.L."/>
            <person name="Richter J."/>
            <person name="Russo S."/>
            <person name="Schroeder A.J."/>
            <person name="Shu S.Q."/>
            <person name="Stapleton M."/>
            <person name="Yamada C."/>
            <person name="Ashburner M."/>
            <person name="Gelbart W.M."/>
            <person name="Rubin G.M."/>
            <person name="Lewis S.E."/>
        </authorList>
    </citation>
    <scope>GENOME REANNOTATION</scope>
    <source>
        <strain>Berkeley</strain>
    </source>
</reference>
<reference key="4">
    <citation type="submission" date="2004-08" db="EMBL/GenBank/DDBJ databases">
        <authorList>
            <person name="Stapleton M."/>
            <person name="Carlson J."/>
            <person name="Chavez C."/>
            <person name="Frise E."/>
            <person name="George R."/>
            <person name="Pacleb J."/>
            <person name="Park S."/>
            <person name="Wan K."/>
            <person name="Yu C."/>
            <person name="Rubin G.M."/>
            <person name="Celniker S."/>
        </authorList>
    </citation>
    <scope>NUCLEOTIDE SEQUENCE [LARGE SCALE MRNA]</scope>
    <source>
        <tissue evidence="9">Testis</tissue>
    </source>
</reference>
<reference key="5">
    <citation type="journal article" date="1992" name="J. Biol. Chem.">
        <title>Cloning, functional expression, and developmental regulation of a neuropeptide Y receptor from Drosophila melanogaster.</title>
        <authorList>
            <person name="Li X.-J."/>
            <person name="Wu Y.-N."/>
            <person name="North R.A."/>
            <person name="Forte M.A."/>
        </authorList>
    </citation>
    <scope>NUCLEOTIDE SEQUENCE [MRNA] OF 9-464</scope>
    <scope>SUBCELLULAR LOCATION</scope>
    <scope>DEVELOPMENTAL STAGE</scope>
    <source>
        <strain evidence="9">Canton-S</strain>
        <tissue evidence="9">Head</tissue>
    </source>
</reference>
<reference key="6">
    <citation type="journal article" date="2011" name="Biochem. Biophys. Res. Commun.">
        <title>Identification of the novel bioactive peptides dRYamide-1 and dRYamide-2, ligands for a neuropeptide Y-like receptor in Drosophila.</title>
        <authorList>
            <person name="Ida T."/>
            <person name="Takahashi T."/>
            <person name="Tominaga H."/>
            <person name="Sato T."/>
            <person name="Kume K."/>
            <person name="Ozaki M."/>
            <person name="Hiraguchi T."/>
            <person name="Maeda T."/>
            <person name="Shiotani H."/>
            <person name="Terajima S."/>
            <person name="Sano H."/>
            <person name="Mori K."/>
            <person name="Yoshida M."/>
            <person name="Miyazato M."/>
            <person name="Kato J."/>
            <person name="Murakami N."/>
            <person name="Kangawa K."/>
            <person name="Kojima M."/>
        </authorList>
    </citation>
    <scope>FUNCTION</scope>
    <scope>SUBCELLULAR LOCATION</scope>
</reference>